<comment type="function">
    <text evidence="1">Catalyzes the methyl esterification of L-isoaspartyl residues in peptides and proteins that result from spontaneous decomposition of normal L-aspartyl and L-asparaginyl residues. It plays a role in the repair and/or degradation of damaged proteins.</text>
</comment>
<comment type="catalytic activity">
    <reaction evidence="1">
        <text>[protein]-L-isoaspartate + S-adenosyl-L-methionine = [protein]-L-isoaspartate alpha-methyl ester + S-adenosyl-L-homocysteine</text>
        <dbReference type="Rhea" id="RHEA:12705"/>
        <dbReference type="Rhea" id="RHEA-COMP:12143"/>
        <dbReference type="Rhea" id="RHEA-COMP:12144"/>
        <dbReference type="ChEBI" id="CHEBI:57856"/>
        <dbReference type="ChEBI" id="CHEBI:59789"/>
        <dbReference type="ChEBI" id="CHEBI:90596"/>
        <dbReference type="ChEBI" id="CHEBI:90598"/>
        <dbReference type="EC" id="2.1.1.77"/>
    </reaction>
</comment>
<comment type="subcellular location">
    <subcellularLocation>
        <location evidence="1">Cytoplasm</location>
    </subcellularLocation>
</comment>
<comment type="similarity">
    <text evidence="1">Belongs to the methyltransferase superfamily. L-isoaspartyl/D-aspartyl protein methyltransferase family.</text>
</comment>
<accession>Q2S176</accession>
<name>PIMT_SALRD</name>
<evidence type="ECO:0000255" key="1">
    <source>
        <dbReference type="HAMAP-Rule" id="MF_00090"/>
    </source>
</evidence>
<keyword id="KW-0963">Cytoplasm</keyword>
<keyword id="KW-0489">Methyltransferase</keyword>
<keyword id="KW-1185">Reference proteome</keyword>
<keyword id="KW-0949">S-adenosyl-L-methionine</keyword>
<keyword id="KW-0808">Transferase</keyword>
<proteinExistence type="inferred from homology"/>
<sequence>MTATPSDDRKYRHQRERLVETLRERGIHDERVLSAVGAVARHAFVDPALRDRAYADEALPIGLNQTISQPFTVAYQTALLGVQPDDRILEVGTGSGFQAAVLCEMGARVYSIERHDDLLRRARSVLDGLGYDVRTRHGDGTRGWPAFAPYDGIVVTAGAPEIPAPLLHQLREPSGEDDGPGGRLVIPIGGREGQTMTRVRRTGSGPHDYEQEEFHSFRFVPLVDEDEGGG</sequence>
<reference key="1">
    <citation type="journal article" date="2005" name="Proc. Natl. Acad. Sci. U.S.A.">
        <title>The genome of Salinibacter ruber: convergence and gene exchange among hyperhalophilic bacteria and archaea.</title>
        <authorList>
            <person name="Mongodin E.F."/>
            <person name="Nelson K.E."/>
            <person name="Daugherty S."/>
            <person name="DeBoy R.T."/>
            <person name="Wister J."/>
            <person name="Khouri H."/>
            <person name="Weidman J."/>
            <person name="Walsh D.A."/>
            <person name="Papke R.T."/>
            <person name="Sanchez Perez G."/>
            <person name="Sharma A.K."/>
            <person name="Nesbo C.L."/>
            <person name="MacLeod D."/>
            <person name="Bapteste E."/>
            <person name="Doolittle W.F."/>
            <person name="Charlebois R.L."/>
            <person name="Legault B."/>
            <person name="Rodriguez-Valera F."/>
        </authorList>
    </citation>
    <scope>NUCLEOTIDE SEQUENCE [LARGE SCALE GENOMIC DNA]</scope>
    <source>
        <strain>DSM 13855 / CECT 5946 / M31</strain>
    </source>
</reference>
<protein>
    <recommendedName>
        <fullName evidence="1">Protein-L-isoaspartate O-methyltransferase</fullName>
        <ecNumber evidence="1">2.1.1.77</ecNumber>
    </recommendedName>
    <alternativeName>
        <fullName evidence="1">L-isoaspartyl protein carboxyl methyltransferase</fullName>
    </alternativeName>
    <alternativeName>
        <fullName evidence="1">Protein L-isoaspartyl methyltransferase</fullName>
    </alternativeName>
    <alternativeName>
        <fullName evidence="1">Protein-beta-aspartate methyltransferase</fullName>
        <shortName evidence="1">PIMT</shortName>
    </alternativeName>
</protein>
<dbReference type="EC" id="2.1.1.77" evidence="1"/>
<dbReference type="EMBL" id="CP000159">
    <property type="protein sequence ID" value="ABC45247.1"/>
    <property type="molecule type" value="Genomic_DNA"/>
</dbReference>
<dbReference type="RefSeq" id="WP_011404680.1">
    <property type="nucleotide sequence ID" value="NC_007677.1"/>
</dbReference>
<dbReference type="RefSeq" id="YP_446055.1">
    <property type="nucleotide sequence ID" value="NC_007677.1"/>
</dbReference>
<dbReference type="SMR" id="Q2S176"/>
<dbReference type="STRING" id="309807.SRU_1945"/>
<dbReference type="EnsemblBacteria" id="ABC45247">
    <property type="protein sequence ID" value="ABC45247"/>
    <property type="gene ID" value="SRU_1945"/>
</dbReference>
<dbReference type="KEGG" id="sru:SRU_1945"/>
<dbReference type="PATRIC" id="fig|309807.25.peg.2017"/>
<dbReference type="eggNOG" id="COG2518">
    <property type="taxonomic scope" value="Bacteria"/>
</dbReference>
<dbReference type="HOGENOM" id="CLU_055432_2_0_10"/>
<dbReference type="OrthoDB" id="9810066at2"/>
<dbReference type="Proteomes" id="UP000008674">
    <property type="component" value="Chromosome"/>
</dbReference>
<dbReference type="GO" id="GO:0005737">
    <property type="term" value="C:cytoplasm"/>
    <property type="evidence" value="ECO:0007669"/>
    <property type="project" value="UniProtKB-SubCell"/>
</dbReference>
<dbReference type="GO" id="GO:0004719">
    <property type="term" value="F:protein-L-isoaspartate (D-aspartate) O-methyltransferase activity"/>
    <property type="evidence" value="ECO:0007669"/>
    <property type="project" value="UniProtKB-UniRule"/>
</dbReference>
<dbReference type="GO" id="GO:0032259">
    <property type="term" value="P:methylation"/>
    <property type="evidence" value="ECO:0007669"/>
    <property type="project" value="UniProtKB-KW"/>
</dbReference>
<dbReference type="GO" id="GO:0036211">
    <property type="term" value="P:protein modification process"/>
    <property type="evidence" value="ECO:0007669"/>
    <property type="project" value="UniProtKB-UniRule"/>
</dbReference>
<dbReference type="GO" id="GO:0030091">
    <property type="term" value="P:protein repair"/>
    <property type="evidence" value="ECO:0007669"/>
    <property type="project" value="UniProtKB-UniRule"/>
</dbReference>
<dbReference type="CDD" id="cd02440">
    <property type="entry name" value="AdoMet_MTases"/>
    <property type="match status" value="1"/>
</dbReference>
<dbReference type="FunFam" id="3.40.50.150:FF:000010">
    <property type="entry name" value="Protein-L-isoaspartate O-methyltransferase"/>
    <property type="match status" value="1"/>
</dbReference>
<dbReference type="Gene3D" id="3.40.50.150">
    <property type="entry name" value="Vaccinia Virus protein VP39"/>
    <property type="match status" value="1"/>
</dbReference>
<dbReference type="HAMAP" id="MF_00090">
    <property type="entry name" value="PIMT"/>
    <property type="match status" value="1"/>
</dbReference>
<dbReference type="InterPro" id="IPR000682">
    <property type="entry name" value="PCMT"/>
</dbReference>
<dbReference type="InterPro" id="IPR029063">
    <property type="entry name" value="SAM-dependent_MTases_sf"/>
</dbReference>
<dbReference type="NCBIfam" id="TIGR00080">
    <property type="entry name" value="pimt"/>
    <property type="match status" value="1"/>
</dbReference>
<dbReference type="NCBIfam" id="NF001453">
    <property type="entry name" value="PRK00312.1"/>
    <property type="match status" value="1"/>
</dbReference>
<dbReference type="PANTHER" id="PTHR11579">
    <property type="entry name" value="PROTEIN-L-ISOASPARTATE O-METHYLTRANSFERASE"/>
    <property type="match status" value="1"/>
</dbReference>
<dbReference type="PANTHER" id="PTHR11579:SF0">
    <property type="entry name" value="PROTEIN-L-ISOASPARTATE(D-ASPARTATE) O-METHYLTRANSFERASE"/>
    <property type="match status" value="1"/>
</dbReference>
<dbReference type="Pfam" id="PF01135">
    <property type="entry name" value="PCMT"/>
    <property type="match status" value="1"/>
</dbReference>
<dbReference type="SUPFAM" id="SSF53335">
    <property type="entry name" value="S-adenosyl-L-methionine-dependent methyltransferases"/>
    <property type="match status" value="1"/>
</dbReference>
<dbReference type="PROSITE" id="PS01279">
    <property type="entry name" value="PCMT"/>
    <property type="match status" value="1"/>
</dbReference>
<gene>
    <name evidence="1" type="primary">pcm</name>
    <name type="ordered locus">SRU_1945</name>
</gene>
<feature type="chain" id="PRO_0000351933" description="Protein-L-isoaspartate O-methyltransferase">
    <location>
        <begin position="1"/>
        <end position="230"/>
    </location>
</feature>
<feature type="active site" evidence="1">
    <location>
        <position position="68"/>
    </location>
</feature>
<organism>
    <name type="scientific">Salinibacter ruber (strain DSM 13855 / M31)</name>
    <dbReference type="NCBI Taxonomy" id="309807"/>
    <lineage>
        <taxon>Bacteria</taxon>
        <taxon>Pseudomonadati</taxon>
        <taxon>Rhodothermota</taxon>
        <taxon>Rhodothermia</taxon>
        <taxon>Rhodothermales</taxon>
        <taxon>Salinibacteraceae</taxon>
        <taxon>Salinibacter</taxon>
    </lineage>
</organism>